<dbReference type="EMBL" id="CP001401">
    <property type="protein sequence ID" value="ACP55559.1"/>
    <property type="molecule type" value="Genomic_DNA"/>
</dbReference>
<dbReference type="RefSeq" id="WP_012711558.1">
    <property type="nucleotide sequence ID" value="NC_012632.1"/>
</dbReference>
<dbReference type="SMR" id="C3N6D4"/>
<dbReference type="KEGG" id="sim:M1627_1681"/>
<dbReference type="HOGENOM" id="CLU_022916_0_0_2"/>
<dbReference type="Proteomes" id="UP000002307">
    <property type="component" value="Chromosome"/>
</dbReference>
<dbReference type="GO" id="GO:0005886">
    <property type="term" value="C:plasma membrane"/>
    <property type="evidence" value="ECO:0007669"/>
    <property type="project" value="UniProtKB-SubCell"/>
</dbReference>
<dbReference type="GO" id="GO:0033178">
    <property type="term" value="C:proton-transporting two-sector ATPase complex, catalytic domain"/>
    <property type="evidence" value="ECO:0007669"/>
    <property type="project" value="InterPro"/>
</dbReference>
<dbReference type="GO" id="GO:0005524">
    <property type="term" value="F:ATP binding"/>
    <property type="evidence" value="ECO:0007669"/>
    <property type="project" value="UniProtKB-UniRule"/>
</dbReference>
<dbReference type="GO" id="GO:0046933">
    <property type="term" value="F:proton-transporting ATP synthase activity, rotational mechanism"/>
    <property type="evidence" value="ECO:0007669"/>
    <property type="project" value="UniProtKB-UniRule"/>
</dbReference>
<dbReference type="GO" id="GO:0046961">
    <property type="term" value="F:proton-transporting ATPase activity, rotational mechanism"/>
    <property type="evidence" value="ECO:0007669"/>
    <property type="project" value="TreeGrafter"/>
</dbReference>
<dbReference type="GO" id="GO:0042777">
    <property type="term" value="P:proton motive force-driven plasma membrane ATP synthesis"/>
    <property type="evidence" value="ECO:0007669"/>
    <property type="project" value="UniProtKB-UniRule"/>
</dbReference>
<dbReference type="CDD" id="cd18112">
    <property type="entry name" value="ATP-synt_V_A-type_beta_C"/>
    <property type="match status" value="1"/>
</dbReference>
<dbReference type="CDD" id="cd18118">
    <property type="entry name" value="ATP-synt_V_A-type_beta_N"/>
    <property type="match status" value="1"/>
</dbReference>
<dbReference type="CDD" id="cd01135">
    <property type="entry name" value="V_A-ATPase_B"/>
    <property type="match status" value="1"/>
</dbReference>
<dbReference type="Gene3D" id="3.40.50.12240">
    <property type="match status" value="1"/>
</dbReference>
<dbReference type="HAMAP" id="MF_00310">
    <property type="entry name" value="ATP_synth_B_arch"/>
    <property type="match status" value="1"/>
</dbReference>
<dbReference type="InterPro" id="IPR055190">
    <property type="entry name" value="ATP-synt_VA_C"/>
</dbReference>
<dbReference type="InterPro" id="IPR020003">
    <property type="entry name" value="ATPase_a/bsu_AS"/>
</dbReference>
<dbReference type="InterPro" id="IPR005724">
    <property type="entry name" value="ATPase_A1-cplx_bsu"/>
</dbReference>
<dbReference type="InterPro" id="IPR004100">
    <property type="entry name" value="ATPase_F1/V1/A1_a/bsu_N"/>
</dbReference>
<dbReference type="InterPro" id="IPR000194">
    <property type="entry name" value="ATPase_F1/V1/A1_a/bsu_nucl-bd"/>
</dbReference>
<dbReference type="InterPro" id="IPR027417">
    <property type="entry name" value="P-loop_NTPase"/>
</dbReference>
<dbReference type="InterPro" id="IPR022879">
    <property type="entry name" value="V-ATPase_su_B/beta"/>
</dbReference>
<dbReference type="NCBIfam" id="TIGR01041">
    <property type="entry name" value="ATP_syn_B_arch"/>
    <property type="match status" value="1"/>
</dbReference>
<dbReference type="NCBIfam" id="NF003235">
    <property type="entry name" value="PRK04196.1"/>
    <property type="match status" value="1"/>
</dbReference>
<dbReference type="PANTHER" id="PTHR43389">
    <property type="entry name" value="V-TYPE PROTON ATPASE SUBUNIT B"/>
    <property type="match status" value="1"/>
</dbReference>
<dbReference type="PANTHER" id="PTHR43389:SF4">
    <property type="entry name" value="V-TYPE PROTON ATPASE SUBUNIT B"/>
    <property type="match status" value="1"/>
</dbReference>
<dbReference type="Pfam" id="PF00006">
    <property type="entry name" value="ATP-synt_ab"/>
    <property type="match status" value="1"/>
</dbReference>
<dbReference type="Pfam" id="PF02874">
    <property type="entry name" value="ATP-synt_ab_N"/>
    <property type="match status" value="1"/>
</dbReference>
<dbReference type="Pfam" id="PF22919">
    <property type="entry name" value="ATP-synt_VA_C"/>
    <property type="match status" value="1"/>
</dbReference>
<dbReference type="PIRSF" id="PIRSF039114">
    <property type="entry name" value="V-ATPsynth_beta/V-ATPase_B"/>
    <property type="match status" value="1"/>
</dbReference>
<dbReference type="SUPFAM" id="SSF52540">
    <property type="entry name" value="P-loop containing nucleoside triphosphate hydrolases"/>
    <property type="match status" value="1"/>
</dbReference>
<dbReference type="PROSITE" id="PS00152">
    <property type="entry name" value="ATPASE_ALPHA_BETA"/>
    <property type="match status" value="1"/>
</dbReference>
<name>AATB_SACI3</name>
<organism>
    <name type="scientific">Saccharolobus islandicus (strain M.16.27)</name>
    <name type="common">Sulfolobus islandicus</name>
    <dbReference type="NCBI Taxonomy" id="427318"/>
    <lineage>
        <taxon>Archaea</taxon>
        <taxon>Thermoproteota</taxon>
        <taxon>Thermoprotei</taxon>
        <taxon>Sulfolobales</taxon>
        <taxon>Sulfolobaceae</taxon>
        <taxon>Saccharolobus</taxon>
    </lineage>
</organism>
<protein>
    <recommendedName>
        <fullName evidence="1">A-type ATP synthase subunit B</fullName>
    </recommendedName>
</protein>
<evidence type="ECO:0000255" key="1">
    <source>
        <dbReference type="HAMAP-Rule" id="MF_00310"/>
    </source>
</evidence>
<keyword id="KW-0066">ATP synthesis</keyword>
<keyword id="KW-1003">Cell membrane</keyword>
<keyword id="KW-0375">Hydrogen ion transport</keyword>
<keyword id="KW-0406">Ion transport</keyword>
<keyword id="KW-0472">Membrane</keyword>
<keyword id="KW-0813">Transport</keyword>
<gene>
    <name evidence="1" type="primary">atpB</name>
    <name type="ordered locus">M1627_1681</name>
</gene>
<proteinExistence type="inferred from homology"/>
<reference key="1">
    <citation type="journal article" date="2009" name="Proc. Natl. Acad. Sci. U.S.A.">
        <title>Biogeography of the Sulfolobus islandicus pan-genome.</title>
        <authorList>
            <person name="Reno M.L."/>
            <person name="Held N.L."/>
            <person name="Fields C.J."/>
            <person name="Burke P.V."/>
            <person name="Whitaker R.J."/>
        </authorList>
    </citation>
    <scope>NUCLEOTIDE SEQUENCE [LARGE SCALE GENOMIC DNA]</scope>
    <source>
        <strain>M.16.27</strain>
    </source>
</reference>
<comment type="function">
    <text evidence="1">Component of the A-type ATP synthase that produces ATP from ADP in the presence of a proton gradient across the membrane. The B chain is a regulatory subunit.</text>
</comment>
<comment type="subunit">
    <text evidence="1">Has multiple subunits with at least A(3), B(3), C, D, E, F, H, I and proteolipid K(x).</text>
</comment>
<comment type="subcellular location">
    <subcellularLocation>
        <location evidence="1">Cell membrane</location>
        <topology evidence="1">Peripheral membrane protein</topology>
    </subcellularLocation>
</comment>
<comment type="similarity">
    <text evidence="1">Belongs to the ATPase alpha/beta chains family.</text>
</comment>
<accession>C3N6D4</accession>
<sequence>MLSVREFSNISMIKGPLIYVQGVTDASYNELVEIEMPNGEKRRGLVIDSQMGIAIVQVFEGTTGVSPTGTKIRMLGRGLEVKISEEMLGRIFNPLGDSLDNGPPVIKGEKRDINGSPLNPAAREYPEEFIQTGISAIDGLNALLRGQKLPIFSGSGLPANMLAAQIAKQATVRGEESNFAVVFAAIGARYDDALFFRKFFEETGAINRVAMIVSLANEPPVMKTLTPKTALTLAEYLAFEQDMHVLAILIDMTNYCEALREISAAREEVPGRGGYPGYMYTDLATIYERAGKVLGKKGSITQMPILTMPNDDITHPIPDLTGYITEGQIVLDRALYNKGIYPPINVLMSLSRLAKDGIGEGKTRDDHKDVSNQLFASYARAVDTRGLAAIIGEDSLSEVDRKYLLFGELFERKFVSQGFNENRDIETTLDIGWEILSVLPESELTNIKTQYIKKYHPNYRGKK</sequence>
<feature type="chain" id="PRO_1000205042" description="A-type ATP synthase subunit B">
    <location>
        <begin position="1"/>
        <end position="463"/>
    </location>
</feature>